<organism>
    <name type="scientific">Nitrobacter winogradskyi (strain ATCC 25391 / DSM 10237 / CIP 104748 / NCIMB 11846 / Nb-255)</name>
    <dbReference type="NCBI Taxonomy" id="323098"/>
    <lineage>
        <taxon>Bacteria</taxon>
        <taxon>Pseudomonadati</taxon>
        <taxon>Pseudomonadota</taxon>
        <taxon>Alphaproteobacteria</taxon>
        <taxon>Hyphomicrobiales</taxon>
        <taxon>Nitrobacteraceae</taxon>
        <taxon>Nitrobacter</taxon>
    </lineage>
</organism>
<dbReference type="EC" id="4.2.1.33" evidence="1"/>
<dbReference type="EMBL" id="CP000115">
    <property type="protein sequence ID" value="ABA06038.1"/>
    <property type="molecule type" value="Genomic_DNA"/>
</dbReference>
<dbReference type="RefSeq" id="WP_011315983.1">
    <property type="nucleotide sequence ID" value="NC_007406.1"/>
</dbReference>
<dbReference type="SMR" id="Q3SNV3"/>
<dbReference type="STRING" id="323098.Nwi_2785"/>
<dbReference type="KEGG" id="nwi:Nwi_2785"/>
<dbReference type="eggNOG" id="COG0065">
    <property type="taxonomic scope" value="Bacteria"/>
</dbReference>
<dbReference type="HOGENOM" id="CLU_006714_3_4_5"/>
<dbReference type="OrthoDB" id="9802769at2"/>
<dbReference type="UniPathway" id="UPA00048">
    <property type="reaction ID" value="UER00071"/>
</dbReference>
<dbReference type="Proteomes" id="UP000002531">
    <property type="component" value="Chromosome"/>
</dbReference>
<dbReference type="GO" id="GO:0003861">
    <property type="term" value="F:3-isopropylmalate dehydratase activity"/>
    <property type="evidence" value="ECO:0007669"/>
    <property type="project" value="UniProtKB-UniRule"/>
</dbReference>
<dbReference type="GO" id="GO:0051539">
    <property type="term" value="F:4 iron, 4 sulfur cluster binding"/>
    <property type="evidence" value="ECO:0007669"/>
    <property type="project" value="UniProtKB-KW"/>
</dbReference>
<dbReference type="GO" id="GO:0046872">
    <property type="term" value="F:metal ion binding"/>
    <property type="evidence" value="ECO:0007669"/>
    <property type="project" value="UniProtKB-KW"/>
</dbReference>
<dbReference type="GO" id="GO:0009098">
    <property type="term" value="P:L-leucine biosynthetic process"/>
    <property type="evidence" value="ECO:0007669"/>
    <property type="project" value="UniProtKB-UniRule"/>
</dbReference>
<dbReference type="CDD" id="cd01583">
    <property type="entry name" value="IPMI"/>
    <property type="match status" value="1"/>
</dbReference>
<dbReference type="FunFam" id="3.30.499.10:FF:000007">
    <property type="entry name" value="3-isopropylmalate dehydratase large subunit"/>
    <property type="match status" value="1"/>
</dbReference>
<dbReference type="Gene3D" id="3.30.499.10">
    <property type="entry name" value="Aconitase, domain 3"/>
    <property type="match status" value="2"/>
</dbReference>
<dbReference type="HAMAP" id="MF_01026">
    <property type="entry name" value="LeuC_type1"/>
    <property type="match status" value="1"/>
</dbReference>
<dbReference type="InterPro" id="IPR004430">
    <property type="entry name" value="3-IsopropMal_deHydase_lsu"/>
</dbReference>
<dbReference type="InterPro" id="IPR015931">
    <property type="entry name" value="Acnase/IPM_dHydase_lsu_aba_1/3"/>
</dbReference>
<dbReference type="InterPro" id="IPR001030">
    <property type="entry name" value="Acoase/IPM_deHydtase_lsu_aba"/>
</dbReference>
<dbReference type="InterPro" id="IPR018136">
    <property type="entry name" value="Aconitase_4Fe-4S_BS"/>
</dbReference>
<dbReference type="InterPro" id="IPR036008">
    <property type="entry name" value="Aconitase_4Fe-4S_dom"/>
</dbReference>
<dbReference type="InterPro" id="IPR050067">
    <property type="entry name" value="IPM_dehydratase_rel_enz"/>
</dbReference>
<dbReference type="InterPro" id="IPR033941">
    <property type="entry name" value="IPMI_cat"/>
</dbReference>
<dbReference type="NCBIfam" id="TIGR00170">
    <property type="entry name" value="leuC"/>
    <property type="match status" value="1"/>
</dbReference>
<dbReference type="NCBIfam" id="NF004016">
    <property type="entry name" value="PRK05478.1"/>
    <property type="match status" value="1"/>
</dbReference>
<dbReference type="NCBIfam" id="NF009116">
    <property type="entry name" value="PRK12466.1"/>
    <property type="match status" value="1"/>
</dbReference>
<dbReference type="PANTHER" id="PTHR43822:SF9">
    <property type="entry name" value="3-ISOPROPYLMALATE DEHYDRATASE"/>
    <property type="match status" value="1"/>
</dbReference>
<dbReference type="PANTHER" id="PTHR43822">
    <property type="entry name" value="HOMOACONITASE, MITOCHONDRIAL-RELATED"/>
    <property type="match status" value="1"/>
</dbReference>
<dbReference type="Pfam" id="PF00330">
    <property type="entry name" value="Aconitase"/>
    <property type="match status" value="1"/>
</dbReference>
<dbReference type="PRINTS" id="PR00415">
    <property type="entry name" value="ACONITASE"/>
</dbReference>
<dbReference type="SUPFAM" id="SSF53732">
    <property type="entry name" value="Aconitase iron-sulfur domain"/>
    <property type="match status" value="1"/>
</dbReference>
<dbReference type="PROSITE" id="PS00450">
    <property type="entry name" value="ACONITASE_1"/>
    <property type="match status" value="1"/>
</dbReference>
<dbReference type="PROSITE" id="PS01244">
    <property type="entry name" value="ACONITASE_2"/>
    <property type="match status" value="1"/>
</dbReference>
<keyword id="KW-0004">4Fe-4S</keyword>
<keyword id="KW-0028">Amino-acid biosynthesis</keyword>
<keyword id="KW-0100">Branched-chain amino acid biosynthesis</keyword>
<keyword id="KW-0408">Iron</keyword>
<keyword id="KW-0411">Iron-sulfur</keyword>
<keyword id="KW-0432">Leucine biosynthesis</keyword>
<keyword id="KW-0456">Lyase</keyword>
<keyword id="KW-0479">Metal-binding</keyword>
<keyword id="KW-1185">Reference proteome</keyword>
<evidence type="ECO:0000255" key="1">
    <source>
        <dbReference type="HAMAP-Rule" id="MF_01026"/>
    </source>
</evidence>
<feature type="chain" id="PRO_0000076770" description="3-isopropylmalate dehydratase large subunit">
    <location>
        <begin position="1"/>
        <end position="468"/>
    </location>
</feature>
<feature type="binding site" evidence="1">
    <location>
        <position position="349"/>
    </location>
    <ligand>
        <name>[4Fe-4S] cluster</name>
        <dbReference type="ChEBI" id="CHEBI:49883"/>
    </ligand>
</feature>
<feature type="binding site" evidence="1">
    <location>
        <position position="409"/>
    </location>
    <ligand>
        <name>[4Fe-4S] cluster</name>
        <dbReference type="ChEBI" id="CHEBI:49883"/>
    </ligand>
</feature>
<feature type="binding site" evidence="1">
    <location>
        <position position="412"/>
    </location>
    <ligand>
        <name>[4Fe-4S] cluster</name>
        <dbReference type="ChEBI" id="CHEBI:49883"/>
    </ligand>
</feature>
<sequence>MSQPTTLYDKIWNDHLVHEAEDGTCLIYIDRHLVHEVTSPQAFEGLRVAGRKVHAPEKTLAVVDHNVPTTDRSKPNPDPESAEQIAALAQNARDFGIEYYNEFDKRQGIVHVIGPEQGFTLPGTTIVCGDSHTSTHGAFGALAHGIGTSEVEHVLATQTLIQKKAKNMRAVVDGKLPDGVTAKDIILAIIGEIGTAGGTGYVLEYAGEAIRALSMEGRMTVCNMSIEGGARAGLIAPDETAYEFLKGRPKAPKGADWDAALRYWETLRSDDGAHFDHEIRLDAAKLPPIVTWGTSPEDVIAVTGKVPDPAAIEDEAKRLSKERALHYMGLLPGTKITDIRLDRVFIGSCTNGRIEDLRAAAKIAEGRTVNGNVSAMVVPGSGLVKEQAEAEGLDKIFTRAGFEWREPGCSMCLAMNPDKLKPDERCASTSNRNFEGRQGFKGRTHLVSPSMAAAAAIAGHFVDIREWR</sequence>
<protein>
    <recommendedName>
        <fullName evidence="1">3-isopropylmalate dehydratase large subunit</fullName>
        <ecNumber evidence="1">4.2.1.33</ecNumber>
    </recommendedName>
    <alternativeName>
        <fullName evidence="1">Alpha-IPM isomerase</fullName>
        <shortName evidence="1">IPMI</shortName>
    </alternativeName>
    <alternativeName>
        <fullName evidence="1">Isopropylmalate isomerase</fullName>
    </alternativeName>
</protein>
<reference key="1">
    <citation type="journal article" date="2006" name="Appl. Environ. Microbiol.">
        <title>Genome sequence of the chemolithoautotrophic nitrite-oxidizing bacterium Nitrobacter winogradskyi Nb-255.</title>
        <authorList>
            <person name="Starkenburg S.R."/>
            <person name="Chain P.S.G."/>
            <person name="Sayavedra-Soto L.A."/>
            <person name="Hauser L."/>
            <person name="Land M.L."/>
            <person name="Larimer F.W."/>
            <person name="Malfatti S.A."/>
            <person name="Klotz M.G."/>
            <person name="Bottomley P.J."/>
            <person name="Arp D.J."/>
            <person name="Hickey W.J."/>
        </authorList>
    </citation>
    <scope>NUCLEOTIDE SEQUENCE [LARGE SCALE GENOMIC DNA]</scope>
    <source>
        <strain>ATCC 25391 / DSM 10237 / CIP 104748 / NCIMB 11846 / Nb-255</strain>
    </source>
</reference>
<proteinExistence type="inferred from homology"/>
<gene>
    <name evidence="1" type="primary">leuC</name>
    <name type="ordered locus">Nwi_2785</name>
</gene>
<accession>Q3SNV3</accession>
<comment type="function">
    <text evidence="1">Catalyzes the isomerization between 2-isopropylmalate and 3-isopropylmalate, via the formation of 2-isopropylmaleate.</text>
</comment>
<comment type="catalytic activity">
    <reaction evidence="1">
        <text>(2R,3S)-3-isopropylmalate = (2S)-2-isopropylmalate</text>
        <dbReference type="Rhea" id="RHEA:32287"/>
        <dbReference type="ChEBI" id="CHEBI:1178"/>
        <dbReference type="ChEBI" id="CHEBI:35121"/>
        <dbReference type="EC" id="4.2.1.33"/>
    </reaction>
</comment>
<comment type="cofactor">
    <cofactor evidence="1">
        <name>[4Fe-4S] cluster</name>
        <dbReference type="ChEBI" id="CHEBI:49883"/>
    </cofactor>
    <text evidence="1">Binds 1 [4Fe-4S] cluster per subunit.</text>
</comment>
<comment type="pathway">
    <text evidence="1">Amino-acid biosynthesis; L-leucine biosynthesis; L-leucine from 3-methyl-2-oxobutanoate: step 2/4.</text>
</comment>
<comment type="subunit">
    <text evidence="1">Heterodimer of LeuC and LeuD.</text>
</comment>
<comment type="similarity">
    <text evidence="1">Belongs to the aconitase/IPM isomerase family. LeuC type 1 subfamily.</text>
</comment>
<name>LEUC_NITWN</name>